<evidence type="ECO:0000250" key="1">
    <source>
        <dbReference type="UniProtKB" id="A6QIR4"/>
    </source>
</evidence>
<evidence type="ECO:0000305" key="2"/>
<feature type="chain" id="PRO_0000330697" description="Endoribonuclease MazF">
    <location>
        <begin position="1"/>
        <end position="120"/>
    </location>
</feature>
<accession>Q6G7P1</accession>
<dbReference type="EC" id="3.1.-.-"/>
<dbReference type="EMBL" id="BX571857">
    <property type="protein sequence ID" value="CAG43780.1"/>
    <property type="molecule type" value="Genomic_DNA"/>
</dbReference>
<dbReference type="RefSeq" id="WP_000621175.1">
    <property type="nucleotide sequence ID" value="NC_002953.3"/>
</dbReference>
<dbReference type="SMR" id="Q6G7P1"/>
<dbReference type="KEGG" id="sas:SAS1973"/>
<dbReference type="HOGENOM" id="CLU_121823_1_0_9"/>
<dbReference type="GO" id="GO:0003677">
    <property type="term" value="F:DNA binding"/>
    <property type="evidence" value="ECO:0007669"/>
    <property type="project" value="InterPro"/>
</dbReference>
<dbReference type="GO" id="GO:0003723">
    <property type="term" value="F:RNA binding"/>
    <property type="evidence" value="ECO:0007669"/>
    <property type="project" value="UniProtKB-KW"/>
</dbReference>
<dbReference type="GO" id="GO:0004521">
    <property type="term" value="F:RNA endonuclease activity"/>
    <property type="evidence" value="ECO:0007669"/>
    <property type="project" value="TreeGrafter"/>
</dbReference>
<dbReference type="GO" id="GO:0006402">
    <property type="term" value="P:mRNA catabolic process"/>
    <property type="evidence" value="ECO:0007669"/>
    <property type="project" value="TreeGrafter"/>
</dbReference>
<dbReference type="GO" id="GO:0016075">
    <property type="term" value="P:rRNA catabolic process"/>
    <property type="evidence" value="ECO:0007669"/>
    <property type="project" value="TreeGrafter"/>
</dbReference>
<dbReference type="Gene3D" id="2.30.30.110">
    <property type="match status" value="1"/>
</dbReference>
<dbReference type="InterPro" id="IPR003477">
    <property type="entry name" value="PemK-like"/>
</dbReference>
<dbReference type="InterPro" id="IPR011067">
    <property type="entry name" value="Plasmid_toxin/cell-grow_inhib"/>
</dbReference>
<dbReference type="PANTHER" id="PTHR33988:SF2">
    <property type="entry name" value="ENDORIBONUCLEASE MAZF"/>
    <property type="match status" value="1"/>
</dbReference>
<dbReference type="PANTHER" id="PTHR33988">
    <property type="entry name" value="ENDORIBONUCLEASE MAZF-RELATED"/>
    <property type="match status" value="1"/>
</dbReference>
<dbReference type="Pfam" id="PF02452">
    <property type="entry name" value="PemK_toxin"/>
    <property type="match status" value="1"/>
</dbReference>
<dbReference type="PIRSF" id="PIRSF033490">
    <property type="entry name" value="MazF"/>
    <property type="match status" value="1"/>
</dbReference>
<dbReference type="SUPFAM" id="SSF50118">
    <property type="entry name" value="Cell growth inhibitor/plasmid maintenance toxic component"/>
    <property type="match status" value="1"/>
</dbReference>
<gene>
    <name type="primary">mazF</name>
    <name type="ordered locus">SAS1973</name>
</gene>
<proteinExistence type="inferred from homology"/>
<organism>
    <name type="scientific">Staphylococcus aureus (strain MSSA476)</name>
    <dbReference type="NCBI Taxonomy" id="282459"/>
    <lineage>
        <taxon>Bacteria</taxon>
        <taxon>Bacillati</taxon>
        <taxon>Bacillota</taxon>
        <taxon>Bacilli</taxon>
        <taxon>Bacillales</taxon>
        <taxon>Staphylococcaceae</taxon>
        <taxon>Staphylococcus</taxon>
    </lineage>
</organism>
<protein>
    <recommendedName>
        <fullName>Endoribonuclease MazF</fullName>
        <ecNumber>3.1.-.-</ecNumber>
    </recommendedName>
    <alternativeName>
        <fullName>Toxin MazF</fullName>
    </alternativeName>
    <alternativeName>
        <fullName>mRNA interferase MazF</fullName>
    </alternativeName>
</protein>
<keyword id="KW-0255">Endonuclease</keyword>
<keyword id="KW-0378">Hydrolase</keyword>
<keyword id="KW-0540">Nuclease</keyword>
<keyword id="KW-0694">RNA-binding</keyword>
<keyword id="KW-1277">Toxin-antitoxin system</keyword>
<sequence length="120" mass="13442">MIRRGDVYLADLSPVQGSEQGGVRPVVIIQNDTGNKYSPTVIVAAITGRINKAKIPTHVEIEKKKYKLDKDSVILLEQIRTLDKKRLKEKLTYLSDDKMKEVDNALMISLGLNAVAHQKN</sequence>
<reference key="1">
    <citation type="journal article" date="2004" name="Proc. Natl. Acad. Sci. U.S.A.">
        <title>Complete genomes of two clinical Staphylococcus aureus strains: evidence for the rapid evolution of virulence and drug resistance.</title>
        <authorList>
            <person name="Holden M.T.G."/>
            <person name="Feil E.J."/>
            <person name="Lindsay J.A."/>
            <person name="Peacock S.J."/>
            <person name="Day N.P.J."/>
            <person name="Enright M.C."/>
            <person name="Foster T.J."/>
            <person name="Moore C.E."/>
            <person name="Hurst L."/>
            <person name="Atkin R."/>
            <person name="Barron A."/>
            <person name="Bason N."/>
            <person name="Bentley S.D."/>
            <person name="Chillingworth C."/>
            <person name="Chillingworth T."/>
            <person name="Churcher C."/>
            <person name="Clark L."/>
            <person name="Corton C."/>
            <person name="Cronin A."/>
            <person name="Doggett J."/>
            <person name="Dowd L."/>
            <person name="Feltwell T."/>
            <person name="Hance Z."/>
            <person name="Harris B."/>
            <person name="Hauser H."/>
            <person name="Holroyd S."/>
            <person name="Jagels K."/>
            <person name="James K.D."/>
            <person name="Lennard N."/>
            <person name="Line A."/>
            <person name="Mayes R."/>
            <person name="Moule S."/>
            <person name="Mungall K."/>
            <person name="Ormond D."/>
            <person name="Quail M.A."/>
            <person name="Rabbinowitsch E."/>
            <person name="Rutherford K.M."/>
            <person name="Sanders M."/>
            <person name="Sharp S."/>
            <person name="Simmonds M."/>
            <person name="Stevens K."/>
            <person name="Whitehead S."/>
            <person name="Barrell B.G."/>
            <person name="Spratt B.G."/>
            <person name="Parkhill J."/>
        </authorList>
    </citation>
    <scope>NUCLEOTIDE SEQUENCE [LARGE SCALE GENOMIC DNA]</scope>
    <source>
        <strain>MSSA476</strain>
    </source>
</reference>
<name>MAZF_STAAS</name>
<comment type="function">
    <text evidence="1">Toxic component of a type II toxin-antitoxin (TA) system. Ribosome-independent, sequence-specific endoribonuclease that cleaves mRNA, thus inhibiting protein synthesis and inducing bacterial stasis. It cuts between the first and nucleotides of 5'-UACAU-3' in single-stranded RNA. Neutralized by coexpression with cognate antitoxin MazE.</text>
</comment>
<comment type="subunit">
    <text evidence="1">Forms a complex with MazE which is no longer active as an endoribonuclease.</text>
</comment>
<comment type="similarity">
    <text evidence="2">Belongs to the PemK/MazF family.</text>
</comment>